<keyword id="KW-0067">ATP-binding</keyword>
<keyword id="KW-0436">Ligase</keyword>
<keyword id="KW-0547">Nucleotide-binding</keyword>
<keyword id="KW-0648">Protein biosynthesis</keyword>
<keyword id="KW-1185">Reference proteome</keyword>
<protein>
    <recommendedName>
        <fullName evidence="1">Glutamyl-tRNA(Gln) amidotransferase subunit D</fullName>
        <shortName evidence="1">Glu-ADT subunit D</shortName>
        <ecNumber evidence="1">6.3.5.-</ecNumber>
    </recommendedName>
</protein>
<evidence type="ECO:0000255" key="1">
    <source>
        <dbReference type="HAMAP-Rule" id="MF_00586"/>
    </source>
</evidence>
<evidence type="ECO:0000255" key="2">
    <source>
        <dbReference type="PROSITE-ProRule" id="PRU01068"/>
    </source>
</evidence>
<organism>
    <name type="scientific">Saccharolobus solfataricus (strain ATCC 35092 / DSM 1617 / JCM 11322 / P2)</name>
    <name type="common">Sulfolobus solfataricus</name>
    <dbReference type="NCBI Taxonomy" id="273057"/>
    <lineage>
        <taxon>Archaea</taxon>
        <taxon>Thermoproteota</taxon>
        <taxon>Thermoprotei</taxon>
        <taxon>Sulfolobales</taxon>
        <taxon>Sulfolobaceae</taxon>
        <taxon>Saccharolobus</taxon>
    </lineage>
</organism>
<feature type="chain" id="PRO_0000140064" description="Glutamyl-tRNA(Gln) amidotransferase subunit D">
    <location>
        <begin position="1"/>
        <end position="444"/>
    </location>
</feature>
<feature type="domain" description="Asparaginase/glutaminase" evidence="2">
    <location>
        <begin position="92"/>
        <end position="424"/>
    </location>
</feature>
<feature type="active site" evidence="1">
    <location>
        <position position="102"/>
    </location>
</feature>
<feature type="active site" evidence="1">
    <location>
        <position position="178"/>
    </location>
</feature>
<feature type="active site" evidence="1">
    <location>
        <position position="179"/>
    </location>
</feature>
<feature type="active site" evidence="1">
    <location>
        <position position="257"/>
    </location>
</feature>
<name>GATD_SACS2</name>
<comment type="function">
    <text evidence="1">Allows the formation of correctly charged Gln-tRNA(Gln) through the transamidation of misacylated Glu-tRNA(Gln) in organisms which lack glutaminyl-tRNA synthetase. The reaction takes place in the presence of glutamine and ATP through an activated gamma-phospho-Glu-tRNA(Gln). The GatDE system is specific for glutamate and does not act on aspartate.</text>
</comment>
<comment type="catalytic activity">
    <reaction evidence="1">
        <text>L-glutamyl-tRNA(Gln) + L-glutamine + ATP + H2O = L-glutaminyl-tRNA(Gln) + L-glutamate + ADP + phosphate + H(+)</text>
        <dbReference type="Rhea" id="RHEA:17521"/>
        <dbReference type="Rhea" id="RHEA-COMP:9681"/>
        <dbReference type="Rhea" id="RHEA-COMP:9684"/>
        <dbReference type="ChEBI" id="CHEBI:15377"/>
        <dbReference type="ChEBI" id="CHEBI:15378"/>
        <dbReference type="ChEBI" id="CHEBI:29985"/>
        <dbReference type="ChEBI" id="CHEBI:30616"/>
        <dbReference type="ChEBI" id="CHEBI:43474"/>
        <dbReference type="ChEBI" id="CHEBI:58359"/>
        <dbReference type="ChEBI" id="CHEBI:78520"/>
        <dbReference type="ChEBI" id="CHEBI:78521"/>
        <dbReference type="ChEBI" id="CHEBI:456216"/>
    </reaction>
</comment>
<comment type="subunit">
    <text evidence="1">Heterodimer of GatD and GatE.</text>
</comment>
<comment type="similarity">
    <text evidence="1">Belongs to the asparaginase 1 family. GatD subfamily.</text>
</comment>
<proteinExistence type="inferred from homology"/>
<reference key="1">
    <citation type="journal article" date="2001" name="Proc. Natl. Acad. Sci. U.S.A.">
        <title>The complete genome of the crenarchaeon Sulfolobus solfataricus P2.</title>
        <authorList>
            <person name="She Q."/>
            <person name="Singh R.K."/>
            <person name="Confalonieri F."/>
            <person name="Zivanovic Y."/>
            <person name="Allard G."/>
            <person name="Awayez M.J."/>
            <person name="Chan-Weiher C.C.-Y."/>
            <person name="Clausen I.G."/>
            <person name="Curtis B.A."/>
            <person name="De Moors A."/>
            <person name="Erauso G."/>
            <person name="Fletcher C."/>
            <person name="Gordon P.M.K."/>
            <person name="Heikamp-de Jong I."/>
            <person name="Jeffries A.C."/>
            <person name="Kozera C.J."/>
            <person name="Medina N."/>
            <person name="Peng X."/>
            <person name="Thi-Ngoc H.P."/>
            <person name="Redder P."/>
            <person name="Schenk M.E."/>
            <person name="Theriault C."/>
            <person name="Tolstrup N."/>
            <person name="Charlebois R.L."/>
            <person name="Doolittle W.F."/>
            <person name="Duguet M."/>
            <person name="Gaasterland T."/>
            <person name="Garrett R.A."/>
            <person name="Ragan M.A."/>
            <person name="Sensen C.W."/>
            <person name="Van der Oost J."/>
        </authorList>
    </citation>
    <scope>NUCLEOTIDE SEQUENCE [LARGE SCALE GENOMIC DNA]</scope>
    <source>
        <strain>ATCC 35092 / DSM 1617 / JCM 11322 / P2</strain>
    </source>
</reference>
<dbReference type="EC" id="6.3.5.-" evidence="1"/>
<dbReference type="EMBL" id="AE006641">
    <property type="protein sequence ID" value="AAK41213.1"/>
    <property type="molecule type" value="Genomic_DNA"/>
</dbReference>
<dbReference type="PIR" id="F90244">
    <property type="entry name" value="F90244"/>
</dbReference>
<dbReference type="RefSeq" id="WP_009992368.1">
    <property type="nucleotide sequence ID" value="NC_002754.1"/>
</dbReference>
<dbReference type="SMR" id="Q97ZH5"/>
<dbReference type="FunCoup" id="Q97ZH5">
    <property type="interactions" value="87"/>
</dbReference>
<dbReference type="STRING" id="273057.SSO0938"/>
<dbReference type="PaxDb" id="273057-SSO0938"/>
<dbReference type="EnsemblBacteria" id="AAK41213">
    <property type="protein sequence ID" value="AAK41213"/>
    <property type="gene ID" value="SSO0938"/>
</dbReference>
<dbReference type="GeneID" id="44129866"/>
<dbReference type="KEGG" id="sso:SSO0938"/>
<dbReference type="PATRIC" id="fig|273057.12.peg.933"/>
<dbReference type="eggNOG" id="arCOG01924">
    <property type="taxonomic scope" value="Archaea"/>
</dbReference>
<dbReference type="HOGENOM" id="CLU_019134_2_1_2"/>
<dbReference type="InParanoid" id="Q97ZH5"/>
<dbReference type="PhylomeDB" id="Q97ZH5"/>
<dbReference type="Proteomes" id="UP000001974">
    <property type="component" value="Chromosome"/>
</dbReference>
<dbReference type="GO" id="GO:0004067">
    <property type="term" value="F:asparaginase activity"/>
    <property type="evidence" value="ECO:0007669"/>
    <property type="project" value="InterPro"/>
</dbReference>
<dbReference type="GO" id="GO:0005524">
    <property type="term" value="F:ATP binding"/>
    <property type="evidence" value="ECO:0007669"/>
    <property type="project" value="UniProtKB-KW"/>
</dbReference>
<dbReference type="GO" id="GO:0050567">
    <property type="term" value="F:glutaminyl-tRNA synthase (glutamine-hydrolyzing) activity"/>
    <property type="evidence" value="ECO:0007669"/>
    <property type="project" value="UniProtKB-UniRule"/>
</dbReference>
<dbReference type="GO" id="GO:0006520">
    <property type="term" value="P:amino acid metabolic process"/>
    <property type="evidence" value="ECO:0007669"/>
    <property type="project" value="InterPro"/>
</dbReference>
<dbReference type="GO" id="GO:0006450">
    <property type="term" value="P:regulation of translational fidelity"/>
    <property type="evidence" value="ECO:0007669"/>
    <property type="project" value="InterPro"/>
</dbReference>
<dbReference type="GO" id="GO:0006412">
    <property type="term" value="P:translation"/>
    <property type="evidence" value="ECO:0007669"/>
    <property type="project" value="UniProtKB-UniRule"/>
</dbReference>
<dbReference type="CDD" id="cd08962">
    <property type="entry name" value="GatD"/>
    <property type="match status" value="1"/>
</dbReference>
<dbReference type="Gene3D" id="2.30.30.520">
    <property type="match status" value="1"/>
</dbReference>
<dbReference type="Gene3D" id="3.40.50.40">
    <property type="match status" value="1"/>
</dbReference>
<dbReference type="Gene3D" id="3.40.50.1170">
    <property type="entry name" value="L-asparaginase, N-terminal domain"/>
    <property type="match status" value="1"/>
</dbReference>
<dbReference type="HAMAP" id="MF_00586">
    <property type="entry name" value="GatD"/>
    <property type="match status" value="1"/>
</dbReference>
<dbReference type="InterPro" id="IPR006033">
    <property type="entry name" value="AsnA_fam"/>
</dbReference>
<dbReference type="InterPro" id="IPR036152">
    <property type="entry name" value="Asp/glu_Ase-like_sf"/>
</dbReference>
<dbReference type="InterPro" id="IPR006034">
    <property type="entry name" value="Asparaginase/glutaminase-like"/>
</dbReference>
<dbReference type="InterPro" id="IPR027475">
    <property type="entry name" value="Asparaginase/glutaminase_AS2"/>
</dbReference>
<dbReference type="InterPro" id="IPR040919">
    <property type="entry name" value="Asparaginase_C"/>
</dbReference>
<dbReference type="InterPro" id="IPR011878">
    <property type="entry name" value="GatD"/>
</dbReference>
<dbReference type="InterPro" id="IPR040918">
    <property type="entry name" value="GatD_N"/>
</dbReference>
<dbReference type="InterPro" id="IPR037222">
    <property type="entry name" value="GatD_N_sf"/>
</dbReference>
<dbReference type="InterPro" id="IPR027473">
    <property type="entry name" value="L-asparaginase_C"/>
</dbReference>
<dbReference type="InterPro" id="IPR027474">
    <property type="entry name" value="L-asparaginase_N"/>
</dbReference>
<dbReference type="InterPro" id="IPR037152">
    <property type="entry name" value="L-asparaginase_N_sf"/>
</dbReference>
<dbReference type="NCBIfam" id="TIGR00519">
    <property type="entry name" value="asnASE_I"/>
    <property type="match status" value="1"/>
</dbReference>
<dbReference type="NCBIfam" id="TIGR02153">
    <property type="entry name" value="gatD_arch"/>
    <property type="match status" value="1"/>
</dbReference>
<dbReference type="NCBIfam" id="NF003217">
    <property type="entry name" value="PRK04183.1"/>
    <property type="match status" value="1"/>
</dbReference>
<dbReference type="PANTHER" id="PTHR11707:SF28">
    <property type="entry name" value="60 KDA LYSOPHOSPHOLIPASE"/>
    <property type="match status" value="1"/>
</dbReference>
<dbReference type="PANTHER" id="PTHR11707">
    <property type="entry name" value="L-ASPARAGINASE"/>
    <property type="match status" value="1"/>
</dbReference>
<dbReference type="Pfam" id="PF00710">
    <property type="entry name" value="Asparaginase"/>
    <property type="match status" value="1"/>
</dbReference>
<dbReference type="Pfam" id="PF17763">
    <property type="entry name" value="Asparaginase_C"/>
    <property type="match status" value="1"/>
</dbReference>
<dbReference type="Pfam" id="PF18195">
    <property type="entry name" value="GatD_N"/>
    <property type="match status" value="1"/>
</dbReference>
<dbReference type="PIRSF" id="PIRSF500175">
    <property type="entry name" value="Glu_ADT_D"/>
    <property type="match status" value="1"/>
</dbReference>
<dbReference type="PIRSF" id="PIRSF001220">
    <property type="entry name" value="L-ASNase_gatD"/>
    <property type="match status" value="1"/>
</dbReference>
<dbReference type="PRINTS" id="PR00139">
    <property type="entry name" value="ASNGLNASE"/>
</dbReference>
<dbReference type="SMART" id="SM00870">
    <property type="entry name" value="Asparaginase"/>
    <property type="match status" value="1"/>
</dbReference>
<dbReference type="SUPFAM" id="SSF141300">
    <property type="entry name" value="GatD N-terminal domain-like"/>
    <property type="match status" value="1"/>
</dbReference>
<dbReference type="SUPFAM" id="SSF53774">
    <property type="entry name" value="Glutaminase/Asparaginase"/>
    <property type="match status" value="1"/>
</dbReference>
<dbReference type="PROSITE" id="PS00917">
    <property type="entry name" value="ASN_GLN_ASE_2"/>
    <property type="match status" value="1"/>
</dbReference>
<dbReference type="PROSITE" id="PS51732">
    <property type="entry name" value="ASN_GLN_ASE_3"/>
    <property type="match status" value="1"/>
</dbReference>
<accession>Q97ZH5</accession>
<gene>
    <name evidence="1" type="primary">gatD</name>
    <name type="ordered locus">SSO0938</name>
</gene>
<sequence length="444" mass="50017">MQENYKGKAYDILKNLNIEEGDLIEIKKGDLRIRGILLPSYSKDDRIFVIKLDNGYNIGISIDNITEIKPIEKKSSKDRESERREVHNGAKSEIKIISTGGTIVSRVEYETGAVRPALTTEEIIQFLPEINEIAKVDAEVLFSILSENMKPEFWVKIAESVKKAFDEGNTGIVIAHGTDTMAYTASALAFSLRSLQGPVVLVGSQRSSDRPSSDSAINLLSAVITAKYAPFGEVVVNMHAESSDTYALVHRGVKVRKMHSSRRDAFQSVNDKPLAKVLWKERKLVMLNEKYISKKDETLLDAKFDNRVFLLYYYPGLDRDFLEQMLTNTKIRGIIIAGTGLGHTSSDHIELFRKATKDGIFIGMTTQCLFGRVNMNVYTTGRQLLDAGVTPLEDMLPEVALVKLMWVLAHEQDLEKIQNLMITNLVGEINPRHTLDLFPRWSYE</sequence>